<sequence length="325" mass="35535">MGNENSSLVKIRRGSKEPNVIIECVDSKKDHLSTPVYRKKSRRSVSQSRPTSIIEPPKRSIVPPIPALIKGQLSGDDSISIGSRKSSVSNFRLSSDGSGDSLLSPLTASSNDRRRSRSLCSAQMKDDAQAVAAQQNKDDKTGGSGGRKASSGLVPSLNRLRIQQCFKAAKPSIGDAIMKRAAASRAEMRTMLSKMNEKQIECLGKQMFELITDAVENADKSEKVLTHARQLGGTYASLCPLGFRPDLFAPLADAAIAECVKLDGVHKRCETLSAWSQLFSALFTGVRDGYYQRVRHQRRTSLPQNTITKQLSVDFSKTSDTSFVR</sequence>
<accession>Q10948</accession>
<accession>K8ERY5</accession>
<accession>Q3Y419</accession>
<keyword id="KW-1185">Reference proteome</keyword>
<name>YMP4_CAEEL</name>
<protein>
    <recommendedName>
        <fullName>Uncharacterized protein B0361.4</fullName>
    </recommendedName>
</protein>
<gene>
    <name type="ORF">B0361.4</name>
</gene>
<proteinExistence type="predicted"/>
<reference key="1">
    <citation type="journal article" date="1998" name="Science">
        <title>Genome sequence of the nematode C. elegans: a platform for investigating biology.</title>
        <authorList>
            <consortium name="The C. elegans sequencing consortium"/>
        </authorList>
    </citation>
    <scope>NUCLEOTIDE SEQUENCE [LARGE SCALE GENOMIC DNA]</scope>
    <source>
        <strain>Bristol N2</strain>
    </source>
</reference>
<evidence type="ECO:0000255" key="1">
    <source>
        <dbReference type="PROSITE-ProRule" id="PRU00238"/>
    </source>
</evidence>
<evidence type="ECO:0000256" key="2">
    <source>
        <dbReference type="SAM" id="MobiDB-lite"/>
    </source>
</evidence>
<organism>
    <name type="scientific">Caenorhabditis elegans</name>
    <dbReference type="NCBI Taxonomy" id="6239"/>
    <lineage>
        <taxon>Eukaryota</taxon>
        <taxon>Metazoa</taxon>
        <taxon>Ecdysozoa</taxon>
        <taxon>Nematoda</taxon>
        <taxon>Chromadorea</taxon>
        <taxon>Rhabditida</taxon>
        <taxon>Rhabditina</taxon>
        <taxon>Rhabditomorpha</taxon>
        <taxon>Rhabditoidea</taxon>
        <taxon>Rhabditidae</taxon>
        <taxon>Peloderinae</taxon>
        <taxon>Caenorhabditis</taxon>
    </lineage>
</organism>
<feature type="chain" id="PRO_0000065076" description="Uncharacterized protein B0361.4">
    <location>
        <begin position="1"/>
        <end position="325"/>
    </location>
</feature>
<feature type="domain" description="Globin" evidence="1">
    <location>
        <begin position="153"/>
        <end position="291"/>
    </location>
</feature>
<feature type="region of interest" description="Disordered" evidence="2">
    <location>
        <begin position="32"/>
        <end position="65"/>
    </location>
</feature>
<feature type="region of interest" description="Disordered" evidence="2">
    <location>
        <begin position="99"/>
        <end position="152"/>
    </location>
</feature>
<dbReference type="EMBL" id="FO080185">
    <property type="protein sequence ID" value="CCO25896.1"/>
    <property type="molecule type" value="Genomic_DNA"/>
</dbReference>
<dbReference type="EMBL" id="FO080187">
    <property type="protein sequence ID" value="CCO25896.1"/>
    <property type="status" value="JOINED"/>
    <property type="molecule type" value="Genomic_DNA"/>
</dbReference>
<dbReference type="PIR" id="H88503">
    <property type="entry name" value="H88503"/>
</dbReference>
<dbReference type="RefSeq" id="NP_498600.3">
    <property type="nucleotide sequence ID" value="NM_066199.7"/>
</dbReference>
<dbReference type="SMR" id="Q10948"/>
<dbReference type="FunCoup" id="Q10948">
    <property type="interactions" value="1290"/>
</dbReference>
<dbReference type="STRING" id="6239.B0361.4.1"/>
<dbReference type="PaxDb" id="6239-B0361.4"/>
<dbReference type="EnsemblMetazoa" id="B0361.4.1">
    <property type="protein sequence ID" value="B0361.4.1"/>
    <property type="gene ID" value="WBGene00015158"/>
</dbReference>
<dbReference type="GeneID" id="181940"/>
<dbReference type="KEGG" id="cel:CELE_B0361.4"/>
<dbReference type="UCSC" id="B0361.4">
    <property type="organism name" value="c. elegans"/>
</dbReference>
<dbReference type="AGR" id="WB:WBGene00015158"/>
<dbReference type="CTD" id="181940"/>
<dbReference type="WormBase" id="B0361.4">
    <property type="protein sequence ID" value="CE43739"/>
    <property type="gene ID" value="WBGene00015158"/>
</dbReference>
<dbReference type="eggNOG" id="ENOG502RT8Z">
    <property type="taxonomic scope" value="Eukaryota"/>
</dbReference>
<dbReference type="HOGENOM" id="CLU_934609_0_0_1"/>
<dbReference type="InParanoid" id="Q10948"/>
<dbReference type="OMA" id="CETLSAW"/>
<dbReference type="OrthoDB" id="5843513at2759"/>
<dbReference type="PRO" id="PR:Q10948"/>
<dbReference type="Proteomes" id="UP000001940">
    <property type="component" value="Chromosome III"/>
</dbReference>
<dbReference type="Bgee" id="WBGene00015158">
    <property type="expression patterns" value="Expressed in larva and 3 other cell types or tissues"/>
</dbReference>
<dbReference type="GO" id="GO:0020037">
    <property type="term" value="F:heme binding"/>
    <property type="evidence" value="ECO:0007669"/>
    <property type="project" value="InterPro"/>
</dbReference>
<dbReference type="GO" id="GO:0019825">
    <property type="term" value="F:oxygen binding"/>
    <property type="evidence" value="ECO:0007669"/>
    <property type="project" value="InterPro"/>
</dbReference>
<dbReference type="CDD" id="cd01040">
    <property type="entry name" value="Mb-like"/>
    <property type="match status" value="1"/>
</dbReference>
<dbReference type="Gene3D" id="1.10.490.10">
    <property type="entry name" value="Globins"/>
    <property type="match status" value="1"/>
</dbReference>
<dbReference type="InterPro" id="IPR000971">
    <property type="entry name" value="Globin"/>
</dbReference>
<dbReference type="InterPro" id="IPR009050">
    <property type="entry name" value="Globin-like_sf"/>
</dbReference>
<dbReference type="InterPro" id="IPR012292">
    <property type="entry name" value="Globin/Proto"/>
</dbReference>
<dbReference type="InterPro" id="IPR044399">
    <property type="entry name" value="Mb-like_M"/>
</dbReference>
<dbReference type="SUPFAM" id="SSF46458">
    <property type="entry name" value="Globin-like"/>
    <property type="match status" value="1"/>
</dbReference>
<dbReference type="PROSITE" id="PS01033">
    <property type="entry name" value="GLOBIN"/>
    <property type="match status" value="1"/>
</dbReference>